<dbReference type="EMBL" id="U03762">
    <property type="protein sequence ID" value="AAA50542.1"/>
    <property type="molecule type" value="Genomic_DNA"/>
</dbReference>
<dbReference type="EMBL" id="AY261361">
    <property type="status" value="NOT_ANNOTATED_CDS"/>
    <property type="molecule type" value="Genomic_DNA"/>
</dbReference>
<dbReference type="SMR" id="Q65129"/>
<dbReference type="Proteomes" id="UP000000860">
    <property type="component" value="Segment"/>
</dbReference>
<dbReference type="InterPro" id="IPR004858">
    <property type="entry name" value="MGF_505"/>
</dbReference>
<dbReference type="Pfam" id="PF03158">
    <property type="entry name" value="DUF249"/>
    <property type="match status" value="1"/>
</dbReference>
<protein>
    <recommendedName>
        <fullName>Protein MGF 505-3R</fullName>
    </recommendedName>
</protein>
<feature type="chain" id="PRO_0000373324" description="Protein MGF 505-3R">
    <location>
        <begin position="1"/>
        <end position="278"/>
    </location>
</feature>
<comment type="function">
    <text evidence="1">Plays a role in virus cell tropism, and may be required for efficient virus replication in macrophages.</text>
</comment>
<comment type="induction">
    <text evidence="2">Expressed in the early phase of the viral replicative cycle.</text>
</comment>
<comment type="similarity">
    <text evidence="2">Belongs to the asfivirus MGF 505 family.</text>
</comment>
<reference key="1">
    <citation type="journal article" date="1994" name="Virology">
        <title>Two novel multigene families, 530 and 300, in the terminal variable regions of African swine fever virus genome.</title>
        <authorList>
            <person name="Yozawa T."/>
            <person name="Kutish G.F."/>
            <person name="Afonso C.L."/>
            <person name="Lu Z."/>
            <person name="Rock D.L."/>
        </authorList>
    </citation>
    <scope>NUCLEOTIDE SEQUENCE [GENOMIC DNA]</scope>
</reference>
<reference key="2">
    <citation type="submission" date="2003-03" db="EMBL/GenBank/DDBJ databases">
        <title>African swine fever virus genomes.</title>
        <authorList>
            <person name="Kutish G.F."/>
            <person name="Rock D.L."/>
        </authorList>
    </citation>
    <scope>NUCLEOTIDE SEQUENCE [LARGE SCALE GENOMIC DNA]</scope>
</reference>
<accession>Q65129</accession>
<gene>
    <name type="ordered locus">Mal-036</name>
</gene>
<name>5053R_ASFM2</name>
<organism>
    <name type="scientific">African swine fever virus (isolate Tick/Malawi/Lil 20-1/1983)</name>
    <name type="common">ASFV</name>
    <dbReference type="NCBI Taxonomy" id="10500"/>
    <lineage>
        <taxon>Viruses</taxon>
        <taxon>Varidnaviria</taxon>
        <taxon>Bamfordvirae</taxon>
        <taxon>Nucleocytoviricota</taxon>
        <taxon>Pokkesviricetes</taxon>
        <taxon>Asfuvirales</taxon>
        <taxon>Asfarviridae</taxon>
        <taxon>Asfivirus</taxon>
        <taxon>African swine fever virus</taxon>
    </lineage>
</organism>
<sequence length="278" mass="32452">MSLQELCRKNLPDCELPEFFDDYVLQLLGLHWQDHGSLQRTGKNQVLVQQEPIHINEALKSAASEGNYEIVELLLSWEADPRYAVVGALESNYYDLVHKYYDQVKDCHDMLPLIQNPEMFEKCHELNNTCSLKCLFKHAVIHDMLPILQKYSDYLDGWQYCNQILFELACKRQKYNMVVWIEGVLGVGNFKILFTIAINNRDLQLYSLGYLIILERLYSCGQDPTFLLNHFLRDVSMKGLLPFVLKTIEFGGSKEIAITLAKKYQHKHILKYFETEEC</sequence>
<evidence type="ECO:0000250" key="1">
    <source>
        <dbReference type="UniProtKB" id="Q89642"/>
    </source>
</evidence>
<evidence type="ECO:0000305" key="2"/>
<proteinExistence type="inferred from homology"/>
<organismHost>
    <name type="scientific">Ornithodoros</name>
    <name type="common">relapsing fever ticks</name>
    <dbReference type="NCBI Taxonomy" id="6937"/>
</organismHost>
<organismHost>
    <name type="scientific">Phacochoerus aethiopicus</name>
    <name type="common">Warthog</name>
    <dbReference type="NCBI Taxonomy" id="85517"/>
</organismHost>
<organismHost>
    <name type="scientific">Phacochoerus africanus</name>
    <name type="common">Warthog</name>
    <dbReference type="NCBI Taxonomy" id="41426"/>
</organismHost>
<organismHost>
    <name type="scientific">Potamochoerus larvatus</name>
    <name type="common">Bushpig</name>
    <dbReference type="NCBI Taxonomy" id="273792"/>
</organismHost>
<organismHost>
    <name type="scientific">Sus scrofa</name>
    <name type="common">Pig</name>
    <dbReference type="NCBI Taxonomy" id="9823"/>
</organismHost>
<keyword id="KW-0244">Early protein</keyword>